<keyword id="KW-0227">DNA damage</keyword>
<keyword id="KW-0234">DNA repair</keyword>
<comment type="function">
    <text evidence="1">This protein is involved in the repair of mismatches in DNA. It is required for dam-dependent methyl-directed DNA mismatch repair. May act as a 'molecular matchmaker', a protein that promotes the formation of a stable complex between two or more DNA-binding proteins in an ATP-dependent manner without itself being part of a final effector complex.</text>
</comment>
<comment type="similarity">
    <text evidence="1">Belongs to the DNA mismatch repair MutL/HexB family.</text>
</comment>
<feature type="chain" id="PRO_1000010068" description="DNA mismatch repair protein MutL">
    <location>
        <begin position="1"/>
        <end position="609"/>
    </location>
</feature>
<feature type="region of interest" description="Disordered" evidence="2">
    <location>
        <begin position="364"/>
        <end position="386"/>
    </location>
</feature>
<dbReference type="EMBL" id="CP000847">
    <property type="protein sequence ID" value="ABV75584.1"/>
    <property type="molecule type" value="Genomic_DNA"/>
</dbReference>
<dbReference type="RefSeq" id="WP_012150212.1">
    <property type="nucleotide sequence ID" value="NC_009881.1"/>
</dbReference>
<dbReference type="SMR" id="A8GQA9"/>
<dbReference type="STRING" id="293614.A1C_06805"/>
<dbReference type="KEGG" id="rak:A1C_06805"/>
<dbReference type="eggNOG" id="COG0323">
    <property type="taxonomic scope" value="Bacteria"/>
</dbReference>
<dbReference type="HOGENOM" id="CLU_004131_4_2_5"/>
<dbReference type="Proteomes" id="UP000006830">
    <property type="component" value="Chromosome"/>
</dbReference>
<dbReference type="GO" id="GO:0032300">
    <property type="term" value="C:mismatch repair complex"/>
    <property type="evidence" value="ECO:0007669"/>
    <property type="project" value="InterPro"/>
</dbReference>
<dbReference type="GO" id="GO:0005524">
    <property type="term" value="F:ATP binding"/>
    <property type="evidence" value="ECO:0007669"/>
    <property type="project" value="InterPro"/>
</dbReference>
<dbReference type="GO" id="GO:0016887">
    <property type="term" value="F:ATP hydrolysis activity"/>
    <property type="evidence" value="ECO:0007669"/>
    <property type="project" value="InterPro"/>
</dbReference>
<dbReference type="GO" id="GO:0140664">
    <property type="term" value="F:ATP-dependent DNA damage sensor activity"/>
    <property type="evidence" value="ECO:0007669"/>
    <property type="project" value="InterPro"/>
</dbReference>
<dbReference type="GO" id="GO:0030983">
    <property type="term" value="F:mismatched DNA binding"/>
    <property type="evidence" value="ECO:0007669"/>
    <property type="project" value="InterPro"/>
</dbReference>
<dbReference type="GO" id="GO:0006298">
    <property type="term" value="P:mismatch repair"/>
    <property type="evidence" value="ECO:0007669"/>
    <property type="project" value="UniProtKB-UniRule"/>
</dbReference>
<dbReference type="CDD" id="cd16926">
    <property type="entry name" value="HATPase_MutL-MLH-PMS-like"/>
    <property type="match status" value="1"/>
</dbReference>
<dbReference type="CDD" id="cd00782">
    <property type="entry name" value="MutL_Trans"/>
    <property type="match status" value="1"/>
</dbReference>
<dbReference type="FunFam" id="3.30.565.10:FF:000003">
    <property type="entry name" value="DNA mismatch repair endonuclease MutL"/>
    <property type="match status" value="1"/>
</dbReference>
<dbReference type="Gene3D" id="3.30.230.10">
    <property type="match status" value="1"/>
</dbReference>
<dbReference type="Gene3D" id="3.30.565.10">
    <property type="entry name" value="Histidine kinase-like ATPase, C-terminal domain"/>
    <property type="match status" value="1"/>
</dbReference>
<dbReference type="Gene3D" id="3.30.1540.20">
    <property type="entry name" value="MutL, C-terminal domain, dimerisation subdomain"/>
    <property type="match status" value="1"/>
</dbReference>
<dbReference type="Gene3D" id="3.30.1370.100">
    <property type="entry name" value="MutL, C-terminal domain, regulatory subdomain"/>
    <property type="match status" value="1"/>
</dbReference>
<dbReference type="HAMAP" id="MF_00149">
    <property type="entry name" value="DNA_mis_repair"/>
    <property type="match status" value="1"/>
</dbReference>
<dbReference type="InterPro" id="IPR014762">
    <property type="entry name" value="DNA_mismatch_repair_CS"/>
</dbReference>
<dbReference type="InterPro" id="IPR020667">
    <property type="entry name" value="DNA_mismatch_repair_MutL"/>
</dbReference>
<dbReference type="InterPro" id="IPR013507">
    <property type="entry name" value="DNA_mismatch_S5_2-like"/>
</dbReference>
<dbReference type="InterPro" id="IPR036890">
    <property type="entry name" value="HATPase_C_sf"/>
</dbReference>
<dbReference type="InterPro" id="IPR002099">
    <property type="entry name" value="MutL/Mlh/PMS"/>
</dbReference>
<dbReference type="InterPro" id="IPR038973">
    <property type="entry name" value="MutL/Mlh/Pms-like"/>
</dbReference>
<dbReference type="InterPro" id="IPR014790">
    <property type="entry name" value="MutL_C"/>
</dbReference>
<dbReference type="InterPro" id="IPR042120">
    <property type="entry name" value="MutL_C_dimsub"/>
</dbReference>
<dbReference type="InterPro" id="IPR042121">
    <property type="entry name" value="MutL_C_regsub"/>
</dbReference>
<dbReference type="InterPro" id="IPR037198">
    <property type="entry name" value="MutL_C_sf"/>
</dbReference>
<dbReference type="InterPro" id="IPR020568">
    <property type="entry name" value="Ribosomal_Su5_D2-typ_SF"/>
</dbReference>
<dbReference type="InterPro" id="IPR014721">
    <property type="entry name" value="Ribsml_uS5_D2-typ_fold_subgr"/>
</dbReference>
<dbReference type="NCBIfam" id="TIGR00585">
    <property type="entry name" value="mutl"/>
    <property type="match status" value="1"/>
</dbReference>
<dbReference type="NCBIfam" id="NF000952">
    <property type="entry name" value="PRK00095.2-2"/>
    <property type="match status" value="1"/>
</dbReference>
<dbReference type="NCBIfam" id="NF000953">
    <property type="entry name" value="PRK00095.2-4"/>
    <property type="match status" value="1"/>
</dbReference>
<dbReference type="PANTHER" id="PTHR10073">
    <property type="entry name" value="DNA MISMATCH REPAIR PROTEIN MLH, PMS, MUTL"/>
    <property type="match status" value="1"/>
</dbReference>
<dbReference type="PANTHER" id="PTHR10073:SF12">
    <property type="entry name" value="DNA MISMATCH REPAIR PROTEIN MLH1"/>
    <property type="match status" value="1"/>
</dbReference>
<dbReference type="Pfam" id="PF01119">
    <property type="entry name" value="DNA_mis_repair"/>
    <property type="match status" value="1"/>
</dbReference>
<dbReference type="Pfam" id="PF13589">
    <property type="entry name" value="HATPase_c_3"/>
    <property type="match status" value="1"/>
</dbReference>
<dbReference type="Pfam" id="PF08676">
    <property type="entry name" value="MutL_C"/>
    <property type="match status" value="1"/>
</dbReference>
<dbReference type="SMART" id="SM01340">
    <property type="entry name" value="DNA_mis_repair"/>
    <property type="match status" value="1"/>
</dbReference>
<dbReference type="SMART" id="SM00853">
    <property type="entry name" value="MutL_C"/>
    <property type="match status" value="1"/>
</dbReference>
<dbReference type="SUPFAM" id="SSF55874">
    <property type="entry name" value="ATPase domain of HSP90 chaperone/DNA topoisomerase II/histidine kinase"/>
    <property type="match status" value="1"/>
</dbReference>
<dbReference type="SUPFAM" id="SSF118116">
    <property type="entry name" value="DNA mismatch repair protein MutL"/>
    <property type="match status" value="1"/>
</dbReference>
<dbReference type="SUPFAM" id="SSF54211">
    <property type="entry name" value="Ribosomal protein S5 domain 2-like"/>
    <property type="match status" value="1"/>
</dbReference>
<dbReference type="PROSITE" id="PS00058">
    <property type="entry name" value="DNA_MISMATCH_REPAIR_1"/>
    <property type="match status" value="1"/>
</dbReference>
<organism>
    <name type="scientific">Rickettsia akari (strain Hartford)</name>
    <dbReference type="NCBI Taxonomy" id="293614"/>
    <lineage>
        <taxon>Bacteria</taxon>
        <taxon>Pseudomonadati</taxon>
        <taxon>Pseudomonadota</taxon>
        <taxon>Alphaproteobacteria</taxon>
        <taxon>Rickettsiales</taxon>
        <taxon>Rickettsiaceae</taxon>
        <taxon>Rickettsieae</taxon>
        <taxon>Rickettsia</taxon>
        <taxon>spotted fever group</taxon>
    </lineage>
</organism>
<accession>A8GQA9</accession>
<reference key="1">
    <citation type="submission" date="2007-09" db="EMBL/GenBank/DDBJ databases">
        <title>Complete genome sequence of Rickettsia akari.</title>
        <authorList>
            <person name="Madan A."/>
            <person name="Fahey J."/>
            <person name="Helton E."/>
            <person name="Ketteman M."/>
            <person name="Madan A."/>
            <person name="Rodrigues S."/>
            <person name="Sanchez A."/>
            <person name="Whiting M."/>
            <person name="Dasch G."/>
            <person name="Eremeeva M."/>
        </authorList>
    </citation>
    <scope>NUCLEOTIDE SEQUENCE [LARGE SCALE GENOMIC DNA]</scope>
    <source>
        <strain>Hartford</strain>
    </source>
</reference>
<gene>
    <name evidence="1" type="primary">mutL</name>
    <name type="ordered locus">A1C_06805</name>
</gene>
<name>MUTL_RICAH</name>
<proteinExistence type="inferred from homology"/>
<evidence type="ECO:0000255" key="1">
    <source>
        <dbReference type="HAMAP-Rule" id="MF_00149"/>
    </source>
</evidence>
<evidence type="ECO:0000256" key="2">
    <source>
        <dbReference type="SAM" id="MobiDB-lite"/>
    </source>
</evidence>
<protein>
    <recommendedName>
        <fullName evidence="1">DNA mismatch repair protein MutL</fullName>
    </recommendedName>
</protein>
<sequence>MTIKFLSENTINRIAAGEVIERPASVVKELVENAVDAGSTKIDIILERAGKNLIIISDDGIGMTDKELEIAVERHTTSKLDESDFLNIHTFGFRGEALPSIAAISKMLITSKKQGYDKAFQIKLIGGNEKQVTISVHNEGTKIEIRDLFFATPARLKFLRSDKTELVATVDVVKKIALAHPKISFSLTHDDRNLLKFKGHNKDVETNLKQRIIDVIGDDFIKNAAYIDFKTPDFSICGYTSIPTYNRASSEDQFLFINNRPVKDKLLQVALRVAYQDYLARDRYPLCAIFLQIDPQLVDVNVHPAKAEVRFHDPNYVRNLLIEAIKNALTNTSHVTSTTIASDALQLFKNHLVNKQPSVSKAVSVNSKPTDYRPAMSPSFKSTPNTDCQKLIDTLPHAKIEQEVERRIEREQQAHKQYKLGAAKAQLHTTYIISQTEDSIVITDQHAAHERLGYEKIKDYLKTEELIRQRLLIPEIVELPNERNADSLYENREKLYKLGLTLEKFGEKSIIVTEIPNILGDVNVQKLIHDLADHLSDFGENIALTELIEHVTETYACHYSIRAGRKLSADEMNALLRQMENTPFSGQCNHGRPTYIELKLKDIERLFGR</sequence>